<keyword id="KW-0479">Metal-binding</keyword>
<keyword id="KW-0539">Nucleus</keyword>
<keyword id="KW-1185">Reference proteome</keyword>
<keyword id="KW-0346">Stress response</keyword>
<keyword id="KW-0808">Transferase</keyword>
<keyword id="KW-0833">Ubl conjugation pathway</keyword>
<keyword id="KW-0862">Zinc</keyword>
<keyword id="KW-0863">Zinc-finger</keyword>
<proteinExistence type="evidence at transcript level"/>
<sequence length="302" mass="34355">MGAMDVQLESTAVQHGQAKINVEEHALVSLLSDEKYATEKTEDVDPDDYEKLEEGIMQYGCAHYRRRCRIRAPCCNEIFDCRHCHNETKNSIKIDAVKRHELPRHEVQQVICSLCGTEQEVRQVCISCGVCMGKYFCEVCKLFDDDVSKQQYHCNGCGICRIGGKENFFHCSKCGCCYSIVLKNSHACVEGAMHHDCPICFEYLFESTNDVSVLPCGHTIHVKCLREMEEHCQFACPLCSKSVCDMSKAWERLDEELATISDTCDNKMVRILCNDCGATSEVQFHLIAHKCQKCKSYNTRQI</sequence>
<accession>Q5JL96</accession>
<accession>B9EZ62</accession>
<accession>Q6PVY8</accession>
<protein>
    <recommendedName>
        <fullName evidence="8">Probable E3 ubiquitin-protein ligase RZFP34</fullName>
        <ecNumber evidence="8">2.3.2.27</ecNumber>
    </recommendedName>
    <alternativeName>
        <fullName evidence="7">OsRFP1</fullName>
    </alternativeName>
    <alternativeName>
        <fullName evidence="6">RING zinc-finger protein 34</fullName>
        <shortName evidence="6">OsRZFP34</shortName>
    </alternativeName>
</protein>
<name>ZFP34_ORYSJ</name>
<organism>
    <name type="scientific">Oryza sativa subsp. japonica</name>
    <name type="common">Rice</name>
    <dbReference type="NCBI Taxonomy" id="39947"/>
    <lineage>
        <taxon>Eukaryota</taxon>
        <taxon>Viridiplantae</taxon>
        <taxon>Streptophyta</taxon>
        <taxon>Embryophyta</taxon>
        <taxon>Tracheophyta</taxon>
        <taxon>Spermatophyta</taxon>
        <taxon>Magnoliopsida</taxon>
        <taxon>Liliopsida</taxon>
        <taxon>Poales</taxon>
        <taxon>Poaceae</taxon>
        <taxon>BOP clade</taxon>
        <taxon>Oryzoideae</taxon>
        <taxon>Oryzeae</taxon>
        <taxon>Oryzinae</taxon>
        <taxon>Oryza</taxon>
        <taxon>Oryza sativa</taxon>
    </lineage>
</organism>
<dbReference type="EC" id="2.3.2.27" evidence="8"/>
<dbReference type="EMBL" id="AY574990">
    <property type="protein sequence ID" value="AAS87371.1"/>
    <property type="molecule type" value="mRNA"/>
</dbReference>
<dbReference type="EMBL" id="HQ324800">
    <property type="protein sequence ID" value="AEP20520.1"/>
    <property type="molecule type" value="mRNA"/>
</dbReference>
<dbReference type="EMBL" id="AP003453">
    <property type="protein sequence ID" value="BAD87761.1"/>
    <property type="molecule type" value="Genomic_DNA"/>
</dbReference>
<dbReference type="EMBL" id="AP008207">
    <property type="protein sequence ID" value="BAF05995.1"/>
    <property type="molecule type" value="Genomic_DNA"/>
</dbReference>
<dbReference type="EMBL" id="AP014957">
    <property type="protein sequence ID" value="BAS74057.1"/>
    <property type="molecule type" value="Genomic_DNA"/>
</dbReference>
<dbReference type="EMBL" id="CM000138">
    <property type="protein sequence ID" value="EEE55306.1"/>
    <property type="status" value="ALT_INIT"/>
    <property type="molecule type" value="Genomic_DNA"/>
</dbReference>
<dbReference type="SMR" id="Q5JL96"/>
<dbReference type="FunCoup" id="Q5JL96">
    <property type="interactions" value="1837"/>
</dbReference>
<dbReference type="STRING" id="39947.Q5JL96"/>
<dbReference type="PaxDb" id="39947-Q5JL96"/>
<dbReference type="EnsemblPlants" id="Os01t0719100-02">
    <property type="protein sequence ID" value="Os01t0719100-02"/>
    <property type="gene ID" value="Os01g0719100"/>
</dbReference>
<dbReference type="EnsemblPlants" id="Os01t0719100-04">
    <property type="protein sequence ID" value="Os01t0719100-04"/>
    <property type="gene ID" value="Os01g0719100"/>
</dbReference>
<dbReference type="Gramene" id="Os01t0719100-02">
    <property type="protein sequence ID" value="Os01t0719100-02"/>
    <property type="gene ID" value="Os01g0719100"/>
</dbReference>
<dbReference type="Gramene" id="Os01t0719100-04">
    <property type="protein sequence ID" value="Os01t0719100-04"/>
    <property type="gene ID" value="Os01g0719100"/>
</dbReference>
<dbReference type="KEGG" id="dosa:Os01g0719100"/>
<dbReference type="KEGG" id="osa:4324695"/>
<dbReference type="eggNOG" id="KOG1940">
    <property type="taxonomic scope" value="Eukaryota"/>
</dbReference>
<dbReference type="HOGENOM" id="CLU_013368_1_1_1"/>
<dbReference type="InParanoid" id="Q5JL96"/>
<dbReference type="OMA" id="NACMSIT"/>
<dbReference type="OrthoDB" id="411372at2759"/>
<dbReference type="UniPathway" id="UPA00143"/>
<dbReference type="Proteomes" id="UP000000763">
    <property type="component" value="Chromosome 1"/>
</dbReference>
<dbReference type="Proteomes" id="UP000007752">
    <property type="component" value="Chromosome 1"/>
</dbReference>
<dbReference type="Proteomes" id="UP000059680">
    <property type="component" value="Chromosome 1"/>
</dbReference>
<dbReference type="ExpressionAtlas" id="Q5JL96">
    <property type="expression patterns" value="baseline and differential"/>
</dbReference>
<dbReference type="GO" id="GO:0005634">
    <property type="term" value="C:nucleus"/>
    <property type="evidence" value="ECO:0000318"/>
    <property type="project" value="GO_Central"/>
</dbReference>
<dbReference type="GO" id="GO:0061630">
    <property type="term" value="F:ubiquitin protein ligase activity"/>
    <property type="evidence" value="ECO:0000318"/>
    <property type="project" value="GO_Central"/>
</dbReference>
<dbReference type="GO" id="GO:0008270">
    <property type="term" value="F:zinc ion binding"/>
    <property type="evidence" value="ECO:0007669"/>
    <property type="project" value="UniProtKB-KW"/>
</dbReference>
<dbReference type="GO" id="GO:0016567">
    <property type="term" value="P:protein ubiquitination"/>
    <property type="evidence" value="ECO:0000318"/>
    <property type="project" value="GO_Central"/>
</dbReference>
<dbReference type="GO" id="GO:0006511">
    <property type="term" value="P:ubiquitin-dependent protein catabolic process"/>
    <property type="evidence" value="ECO:0000318"/>
    <property type="project" value="GO_Central"/>
</dbReference>
<dbReference type="Gene3D" id="2.20.28.10">
    <property type="match status" value="1"/>
</dbReference>
<dbReference type="Gene3D" id="3.30.40.10">
    <property type="entry name" value="Zinc/RING finger domain, C3HC4 (zinc finger)"/>
    <property type="match status" value="1"/>
</dbReference>
<dbReference type="InterPro" id="IPR039512">
    <property type="entry name" value="RCHY1_zinc-ribbon"/>
</dbReference>
<dbReference type="InterPro" id="IPR008913">
    <property type="entry name" value="Znf_CHY"/>
</dbReference>
<dbReference type="InterPro" id="IPR037274">
    <property type="entry name" value="Znf_CHY_sf"/>
</dbReference>
<dbReference type="InterPro" id="IPR017921">
    <property type="entry name" value="Znf_CTCHY"/>
</dbReference>
<dbReference type="InterPro" id="IPR037275">
    <property type="entry name" value="Znf_CTCHY_sf"/>
</dbReference>
<dbReference type="InterPro" id="IPR001841">
    <property type="entry name" value="Znf_RING"/>
</dbReference>
<dbReference type="InterPro" id="IPR013083">
    <property type="entry name" value="Znf_RING/FYVE/PHD"/>
</dbReference>
<dbReference type="PANTHER" id="PTHR21319">
    <property type="entry name" value="RING FINGER AND CHY ZINC FINGER DOMAIN-CONTAINING PROTEIN 1"/>
    <property type="match status" value="1"/>
</dbReference>
<dbReference type="PANTHER" id="PTHR21319:SF53">
    <property type="entry name" value="RING FINGER AND CHY ZINC FINGER DOMAIN-CONTAINING PROTEIN 1"/>
    <property type="match status" value="1"/>
</dbReference>
<dbReference type="Pfam" id="PF05495">
    <property type="entry name" value="zf-CHY"/>
    <property type="match status" value="1"/>
</dbReference>
<dbReference type="Pfam" id="PF13639">
    <property type="entry name" value="zf-RING_2"/>
    <property type="match status" value="1"/>
</dbReference>
<dbReference type="Pfam" id="PF14599">
    <property type="entry name" value="zinc_ribbon_6"/>
    <property type="match status" value="1"/>
</dbReference>
<dbReference type="SMART" id="SM00184">
    <property type="entry name" value="RING"/>
    <property type="match status" value="1"/>
</dbReference>
<dbReference type="SUPFAM" id="SSF161219">
    <property type="entry name" value="CHY zinc finger-like"/>
    <property type="match status" value="1"/>
</dbReference>
<dbReference type="SUPFAM" id="SSF57850">
    <property type="entry name" value="RING/U-box"/>
    <property type="match status" value="1"/>
</dbReference>
<dbReference type="SUPFAM" id="SSF161245">
    <property type="entry name" value="Zinc hairpin stack"/>
    <property type="match status" value="1"/>
</dbReference>
<dbReference type="PROSITE" id="PS51266">
    <property type="entry name" value="ZF_CHY"/>
    <property type="match status" value="1"/>
</dbReference>
<dbReference type="PROSITE" id="PS51270">
    <property type="entry name" value="ZF_CTCHY"/>
    <property type="match status" value="1"/>
</dbReference>
<dbReference type="PROSITE" id="PS50089">
    <property type="entry name" value="ZF_RING_2"/>
    <property type="match status" value="1"/>
</dbReference>
<feature type="chain" id="PRO_0000440631" description="Probable E3 ubiquitin-protein ligase RZFP34">
    <location>
        <begin position="1"/>
        <end position="302"/>
    </location>
</feature>
<feature type="zinc finger region" description="CHY-type" evidence="2">
    <location>
        <begin position="54"/>
        <end position="130"/>
    </location>
</feature>
<feature type="zinc finger region" description="CTCHY-type" evidence="3">
    <location>
        <begin position="132"/>
        <end position="196"/>
    </location>
</feature>
<feature type="zinc finger region" description="RING-type; atypical" evidence="1">
    <location>
        <begin position="197"/>
        <end position="240"/>
    </location>
</feature>
<feature type="binding site" evidence="2">
    <location>
        <position position="61"/>
    </location>
    <ligand>
        <name>Zn(2+)</name>
        <dbReference type="ChEBI" id="CHEBI:29105"/>
        <label>1</label>
    </ligand>
</feature>
<feature type="binding site" evidence="2">
    <location>
        <position position="63"/>
    </location>
    <ligand>
        <name>Zn(2+)</name>
        <dbReference type="ChEBI" id="CHEBI:29105"/>
        <label>1</label>
    </ligand>
</feature>
<feature type="binding site" evidence="2">
    <location>
        <position position="74"/>
    </location>
    <ligand>
        <name>Zn(2+)</name>
        <dbReference type="ChEBI" id="CHEBI:29105"/>
        <label>2</label>
    </ligand>
</feature>
<feature type="binding site" evidence="2">
    <location>
        <position position="75"/>
    </location>
    <ligand>
        <name>Zn(2+)</name>
        <dbReference type="ChEBI" id="CHEBI:29105"/>
        <label>2</label>
    </ligand>
</feature>
<feature type="binding site" evidence="2">
    <location>
        <position position="81"/>
    </location>
    <ligand>
        <name>Zn(2+)</name>
        <dbReference type="ChEBI" id="CHEBI:29105"/>
        <label>1</label>
    </ligand>
</feature>
<feature type="binding site" evidence="2">
    <location>
        <position position="84"/>
    </location>
    <ligand>
        <name>Zn(2+)</name>
        <dbReference type="ChEBI" id="CHEBI:29105"/>
        <label>1</label>
    </ligand>
</feature>
<feature type="binding site" evidence="2">
    <location>
        <position position="85"/>
    </location>
    <ligand>
        <name>Zn(2+)</name>
        <dbReference type="ChEBI" id="CHEBI:29105"/>
        <label>2</label>
    </ligand>
</feature>
<feature type="binding site" evidence="2">
    <location>
        <position position="100"/>
    </location>
    <ligand>
        <name>Zn(2+)</name>
        <dbReference type="ChEBI" id="CHEBI:29105"/>
        <label>2</label>
    </ligand>
</feature>
<feature type="binding site" evidence="2">
    <location>
        <position position="112"/>
    </location>
    <ligand>
        <name>Zn(2+)</name>
        <dbReference type="ChEBI" id="CHEBI:29105"/>
        <label>3</label>
    </ligand>
</feature>
<feature type="binding site" evidence="2">
    <location>
        <position position="115"/>
    </location>
    <ligand>
        <name>Zn(2+)</name>
        <dbReference type="ChEBI" id="CHEBI:29105"/>
        <label>3</label>
    </ligand>
</feature>
<feature type="binding site" evidence="2">
    <location>
        <position position="125"/>
    </location>
    <ligand>
        <name>Zn(2+)</name>
        <dbReference type="ChEBI" id="CHEBI:29105"/>
        <label>3</label>
    </ligand>
</feature>
<feature type="binding site" evidence="2">
    <location>
        <position position="128"/>
    </location>
    <ligand>
        <name>Zn(2+)</name>
        <dbReference type="ChEBI" id="CHEBI:29105"/>
        <label>3</label>
    </ligand>
</feature>
<feature type="binding site" evidence="3">
    <location>
        <position position="137"/>
    </location>
    <ligand>
        <name>Zn(2+)</name>
        <dbReference type="ChEBI" id="CHEBI:29105"/>
        <label>4</label>
    </ligand>
</feature>
<feature type="binding site" evidence="3">
    <location>
        <position position="140"/>
    </location>
    <ligand>
        <name>Zn(2+)</name>
        <dbReference type="ChEBI" id="CHEBI:29105"/>
        <label>4</label>
    </ligand>
</feature>
<feature type="binding site" evidence="3">
    <location>
        <position position="153"/>
    </location>
    <ligand>
        <name>Zn(2+)</name>
        <dbReference type="ChEBI" id="CHEBI:29105"/>
        <label>4</label>
    </ligand>
</feature>
<feature type="binding site" evidence="3">
    <location>
        <position position="154"/>
    </location>
    <ligand>
        <name>Zn(2+)</name>
        <dbReference type="ChEBI" id="CHEBI:29105"/>
        <label>5</label>
    </ligand>
</feature>
<feature type="binding site" evidence="3">
    <location>
        <position position="157"/>
    </location>
    <ligand>
        <name>Zn(2+)</name>
        <dbReference type="ChEBI" id="CHEBI:29105"/>
        <label>5</label>
    </ligand>
</feature>
<feature type="binding site" evidence="3">
    <location>
        <position position="160"/>
    </location>
    <ligand>
        <name>Zn(2+)</name>
        <dbReference type="ChEBI" id="CHEBI:29105"/>
        <label>4</label>
    </ligand>
</feature>
<feature type="binding site" evidence="3">
    <location>
        <position position="170"/>
    </location>
    <ligand>
        <name>Zn(2+)</name>
        <dbReference type="ChEBI" id="CHEBI:29105"/>
        <label>5</label>
    </ligand>
</feature>
<feature type="binding site" evidence="3">
    <location>
        <position position="171"/>
    </location>
    <ligand>
        <name>Zn(2+)</name>
        <dbReference type="ChEBI" id="CHEBI:29105"/>
        <label>6</label>
    </ligand>
</feature>
<feature type="binding site" evidence="3">
    <location>
        <position position="174"/>
    </location>
    <ligand>
        <name>Zn(2+)</name>
        <dbReference type="ChEBI" id="CHEBI:29105"/>
        <label>6</label>
    </ligand>
</feature>
<feature type="binding site" evidence="3">
    <location>
        <position position="177"/>
    </location>
    <ligand>
        <name>Zn(2+)</name>
        <dbReference type="ChEBI" id="CHEBI:29105"/>
        <label>5</label>
    </ligand>
</feature>
<feature type="binding site" evidence="3">
    <location>
        <position position="186"/>
    </location>
    <ligand>
        <name>Zn(2+)</name>
        <dbReference type="ChEBI" id="CHEBI:29105"/>
        <label>6</label>
    </ligand>
</feature>
<feature type="binding site" evidence="3">
    <location>
        <position position="188"/>
    </location>
    <ligand>
        <name>Zn(2+)</name>
        <dbReference type="ChEBI" id="CHEBI:29105"/>
        <label>6</label>
    </ligand>
</feature>
<feature type="sequence conflict" description="In Ref. 1; AAS87371." evidence="8" ref="1">
    <original>D</original>
    <variation>G</variation>
    <location>
        <position position="265"/>
    </location>
</feature>
<comment type="function">
    <text evidence="4 5">Possesses transactivation activity in yeast cells (Ref.1). Involved in the regulation of stomatal aperture. May modulate the expression of genes that control stomata opening during heat shock or drought stress (PubMed:25002225).</text>
</comment>
<comment type="catalytic activity">
    <reaction evidence="8">
        <text>S-ubiquitinyl-[E2 ubiquitin-conjugating enzyme]-L-cysteine + [acceptor protein]-L-lysine = [E2 ubiquitin-conjugating enzyme]-L-cysteine + N(6)-ubiquitinyl-[acceptor protein]-L-lysine.</text>
        <dbReference type="EC" id="2.3.2.27"/>
    </reaction>
</comment>
<comment type="pathway">
    <text evidence="8">Protein modification; protein ubiquitination.</text>
</comment>
<comment type="subcellular location">
    <subcellularLocation>
        <location evidence="5">Nucleus</location>
    </subcellularLocation>
</comment>
<comment type="induction">
    <text evidence="4 5">Induced by salicylic acid (SA), ethylene and infection with the rice blast fungal pathogen Magnaporthe oryzae (Ref.1). Induced by abscisic acid (ABA) and heat shock in leaves (PubMed:25002225).</text>
</comment>
<comment type="disruption phenotype">
    <text evidence="4">Decreased relative stomata aperture under normal growth conditions.</text>
</comment>
<comment type="sequence caution" evidence="8">
    <conflict type="erroneous initiation">
        <sequence resource="EMBL-CDS" id="EEE55306"/>
    </conflict>
    <text>Truncated N-terminus.</text>
</comment>
<evidence type="ECO:0000255" key="1">
    <source>
        <dbReference type="PROSITE-ProRule" id="PRU00175"/>
    </source>
</evidence>
<evidence type="ECO:0000255" key="2">
    <source>
        <dbReference type="PROSITE-ProRule" id="PRU00601"/>
    </source>
</evidence>
<evidence type="ECO:0000255" key="3">
    <source>
        <dbReference type="PROSITE-ProRule" id="PRU00965"/>
    </source>
</evidence>
<evidence type="ECO:0000269" key="4">
    <source>
    </source>
</evidence>
<evidence type="ECO:0000269" key="5">
    <source ref="1"/>
</evidence>
<evidence type="ECO:0000303" key="6">
    <source>
    </source>
</evidence>
<evidence type="ECO:0000303" key="7">
    <source ref="1"/>
</evidence>
<evidence type="ECO:0000305" key="8"/>
<evidence type="ECO:0000312" key="9">
    <source>
        <dbReference type="EMBL" id="AEP20520.1"/>
    </source>
</evidence>
<evidence type="ECO:0000312" key="10">
    <source>
        <dbReference type="EMBL" id="BAD87761.1"/>
    </source>
</evidence>
<evidence type="ECO:0000312" key="11">
    <source>
        <dbReference type="EMBL" id="BAF05995.1"/>
    </source>
</evidence>
<evidence type="ECO:0000312" key="12">
    <source>
        <dbReference type="EMBL" id="EEE55306.1"/>
    </source>
</evidence>
<gene>
    <name evidence="6" type="primary">RZFP34</name>
    <name evidence="7" type="synonym">RFP1</name>
    <name evidence="11" type="ordered locus">Os01g0719100</name>
    <name evidence="8" type="ordered locus">LOC_Os01g52110</name>
    <name evidence="12" type="ORF">OsJ_03270</name>
    <name evidence="10" type="ORF">P0480C01.28-1</name>
</gene>
<reference key="1">
    <citation type="journal article" date="2008" name="J. Phytopathol.">
        <title>Characterization of a novel RING finger gene OsRFP1, which is induced by ethylene, salicylic acid and blast fungus infection in rice.</title>
        <authorList>
            <person name="Zhou S."/>
            <person name="Zhao W."/>
            <person name="Li H."/>
            <person name="Guo Z."/>
            <person name="Peng Y.-L."/>
        </authorList>
    </citation>
    <scope>NUCLEOTIDE SEQUENCE [MRNA]</scope>
    <scope>FUNCTION</scope>
    <scope>SUBCELLULAR LOCATION</scope>
    <scope>INDUCTION</scope>
</reference>
<reference key="2">
    <citation type="submission" date="2010-09" db="EMBL/GenBank/DDBJ databases">
        <title>Structural and expression analysis of immature seed genes in Oryza sativa L.</title>
        <authorList>
            <person name="Yoon U.H."/>
        </authorList>
    </citation>
    <scope>NUCLEOTIDE SEQUENCE [MRNA]</scope>
    <source>
        <strain>cv. Ilpoombyeo</strain>
        <tissue evidence="9">Immature seed</tissue>
    </source>
</reference>
<reference key="3">
    <citation type="journal article" date="2002" name="Nature">
        <title>The genome sequence and structure of rice chromosome 1.</title>
        <authorList>
            <person name="Sasaki T."/>
            <person name="Matsumoto T."/>
            <person name="Yamamoto K."/>
            <person name="Sakata K."/>
            <person name="Baba T."/>
            <person name="Katayose Y."/>
            <person name="Wu J."/>
            <person name="Niimura Y."/>
            <person name="Cheng Z."/>
            <person name="Nagamura Y."/>
            <person name="Antonio B.A."/>
            <person name="Kanamori H."/>
            <person name="Hosokawa S."/>
            <person name="Masukawa M."/>
            <person name="Arikawa K."/>
            <person name="Chiden Y."/>
            <person name="Hayashi M."/>
            <person name="Okamoto M."/>
            <person name="Ando T."/>
            <person name="Aoki H."/>
            <person name="Arita K."/>
            <person name="Hamada M."/>
            <person name="Harada C."/>
            <person name="Hijishita S."/>
            <person name="Honda M."/>
            <person name="Ichikawa Y."/>
            <person name="Idonuma A."/>
            <person name="Iijima M."/>
            <person name="Ikeda M."/>
            <person name="Ikeno M."/>
            <person name="Ito S."/>
            <person name="Ito T."/>
            <person name="Ito Y."/>
            <person name="Ito Y."/>
            <person name="Iwabuchi A."/>
            <person name="Kamiya K."/>
            <person name="Karasawa W."/>
            <person name="Katagiri S."/>
            <person name="Kikuta A."/>
            <person name="Kobayashi N."/>
            <person name="Kono I."/>
            <person name="Machita K."/>
            <person name="Maehara T."/>
            <person name="Mizuno H."/>
            <person name="Mizubayashi T."/>
            <person name="Mukai Y."/>
            <person name="Nagasaki H."/>
            <person name="Nakashima M."/>
            <person name="Nakama Y."/>
            <person name="Nakamichi Y."/>
            <person name="Nakamura M."/>
            <person name="Namiki N."/>
            <person name="Negishi M."/>
            <person name="Ohta I."/>
            <person name="Ono N."/>
            <person name="Saji S."/>
            <person name="Sakai K."/>
            <person name="Shibata M."/>
            <person name="Shimokawa T."/>
            <person name="Shomura A."/>
            <person name="Song J."/>
            <person name="Takazaki Y."/>
            <person name="Terasawa K."/>
            <person name="Tsuji K."/>
            <person name="Waki K."/>
            <person name="Yamagata H."/>
            <person name="Yamane H."/>
            <person name="Yoshiki S."/>
            <person name="Yoshihara R."/>
            <person name="Yukawa K."/>
            <person name="Zhong H."/>
            <person name="Iwama H."/>
            <person name="Endo T."/>
            <person name="Ito H."/>
            <person name="Hahn J.H."/>
            <person name="Kim H.-I."/>
            <person name="Eun M.-Y."/>
            <person name="Yano M."/>
            <person name="Jiang J."/>
            <person name="Gojobori T."/>
        </authorList>
    </citation>
    <scope>NUCLEOTIDE SEQUENCE [LARGE SCALE GENOMIC DNA]</scope>
    <source>
        <strain>cv. Nipponbare</strain>
    </source>
</reference>
<reference key="4">
    <citation type="journal article" date="2005" name="Nature">
        <title>The map-based sequence of the rice genome.</title>
        <authorList>
            <consortium name="International rice genome sequencing project (IRGSP)"/>
        </authorList>
    </citation>
    <scope>NUCLEOTIDE SEQUENCE [LARGE SCALE GENOMIC DNA]</scope>
    <source>
        <strain>cv. Nipponbare</strain>
    </source>
</reference>
<reference key="5">
    <citation type="journal article" date="2008" name="Nucleic Acids Res.">
        <title>The rice annotation project database (RAP-DB): 2008 update.</title>
        <authorList>
            <consortium name="The rice annotation project (RAP)"/>
        </authorList>
    </citation>
    <scope>GENOME REANNOTATION</scope>
    <source>
        <strain>cv. Nipponbare</strain>
    </source>
</reference>
<reference key="6">
    <citation type="journal article" date="2013" name="Rice">
        <title>Improvement of the Oryza sativa Nipponbare reference genome using next generation sequence and optical map data.</title>
        <authorList>
            <person name="Kawahara Y."/>
            <person name="de la Bastide M."/>
            <person name="Hamilton J.P."/>
            <person name="Kanamori H."/>
            <person name="McCombie W.R."/>
            <person name="Ouyang S."/>
            <person name="Schwartz D.C."/>
            <person name="Tanaka T."/>
            <person name="Wu J."/>
            <person name="Zhou S."/>
            <person name="Childs K.L."/>
            <person name="Davidson R.M."/>
            <person name="Lin H."/>
            <person name="Quesada-Ocampo L."/>
            <person name="Vaillancourt B."/>
            <person name="Sakai H."/>
            <person name="Lee S.S."/>
            <person name="Kim J."/>
            <person name="Numa H."/>
            <person name="Itoh T."/>
            <person name="Buell C.R."/>
            <person name="Matsumoto T."/>
        </authorList>
    </citation>
    <scope>GENOME REANNOTATION</scope>
    <source>
        <strain>cv. Nipponbare</strain>
    </source>
</reference>
<reference key="7">
    <citation type="journal article" date="2005" name="PLoS Biol.">
        <title>The genomes of Oryza sativa: a history of duplications.</title>
        <authorList>
            <person name="Yu J."/>
            <person name="Wang J."/>
            <person name="Lin W."/>
            <person name="Li S."/>
            <person name="Li H."/>
            <person name="Zhou J."/>
            <person name="Ni P."/>
            <person name="Dong W."/>
            <person name="Hu S."/>
            <person name="Zeng C."/>
            <person name="Zhang J."/>
            <person name="Zhang Y."/>
            <person name="Li R."/>
            <person name="Xu Z."/>
            <person name="Li S."/>
            <person name="Li X."/>
            <person name="Zheng H."/>
            <person name="Cong L."/>
            <person name="Lin L."/>
            <person name="Yin J."/>
            <person name="Geng J."/>
            <person name="Li G."/>
            <person name="Shi J."/>
            <person name="Liu J."/>
            <person name="Lv H."/>
            <person name="Li J."/>
            <person name="Wang J."/>
            <person name="Deng Y."/>
            <person name="Ran L."/>
            <person name="Shi X."/>
            <person name="Wang X."/>
            <person name="Wu Q."/>
            <person name="Li C."/>
            <person name="Ren X."/>
            <person name="Wang J."/>
            <person name="Wang X."/>
            <person name="Li D."/>
            <person name="Liu D."/>
            <person name="Zhang X."/>
            <person name="Ji Z."/>
            <person name="Zhao W."/>
            <person name="Sun Y."/>
            <person name="Zhang Z."/>
            <person name="Bao J."/>
            <person name="Han Y."/>
            <person name="Dong L."/>
            <person name="Ji J."/>
            <person name="Chen P."/>
            <person name="Wu S."/>
            <person name="Liu J."/>
            <person name="Xiao Y."/>
            <person name="Bu D."/>
            <person name="Tan J."/>
            <person name="Yang L."/>
            <person name="Ye C."/>
            <person name="Zhang J."/>
            <person name="Xu J."/>
            <person name="Zhou Y."/>
            <person name="Yu Y."/>
            <person name="Zhang B."/>
            <person name="Zhuang S."/>
            <person name="Wei H."/>
            <person name="Liu B."/>
            <person name="Lei M."/>
            <person name="Yu H."/>
            <person name="Li Y."/>
            <person name="Xu H."/>
            <person name="Wei S."/>
            <person name="He X."/>
            <person name="Fang L."/>
            <person name="Zhang Z."/>
            <person name="Zhang Y."/>
            <person name="Huang X."/>
            <person name="Su Z."/>
            <person name="Tong W."/>
            <person name="Li J."/>
            <person name="Tong Z."/>
            <person name="Li S."/>
            <person name="Ye J."/>
            <person name="Wang L."/>
            <person name="Fang L."/>
            <person name="Lei T."/>
            <person name="Chen C.-S."/>
            <person name="Chen H.-C."/>
            <person name="Xu Z."/>
            <person name="Li H."/>
            <person name="Huang H."/>
            <person name="Zhang F."/>
            <person name="Xu H."/>
            <person name="Li N."/>
            <person name="Zhao C."/>
            <person name="Li S."/>
            <person name="Dong L."/>
            <person name="Huang Y."/>
            <person name="Li L."/>
            <person name="Xi Y."/>
            <person name="Qi Q."/>
            <person name="Li W."/>
            <person name="Zhang B."/>
            <person name="Hu W."/>
            <person name="Zhang Y."/>
            <person name="Tian X."/>
            <person name="Jiao Y."/>
            <person name="Liang X."/>
            <person name="Jin J."/>
            <person name="Gao L."/>
            <person name="Zheng W."/>
            <person name="Hao B."/>
            <person name="Liu S.-M."/>
            <person name="Wang W."/>
            <person name="Yuan L."/>
            <person name="Cao M."/>
            <person name="McDermott J."/>
            <person name="Samudrala R."/>
            <person name="Wang J."/>
            <person name="Wong G.K.-S."/>
            <person name="Yang H."/>
        </authorList>
    </citation>
    <scope>NUCLEOTIDE SEQUENCE [LARGE SCALE GENOMIC DNA]</scope>
    <source>
        <strain>cv. Nipponbare</strain>
    </source>
</reference>
<reference key="8">
    <citation type="journal article" date="2014" name="Plant Mol. Biol.">
        <title>Expression of a gene encoding a rice RING zinc-finger protein, OsRZFP34, enhances stomata opening.</title>
        <authorList>
            <person name="Hsu K.H."/>
            <person name="Liu C.C."/>
            <person name="Wu S.J."/>
            <person name="Kuo Y.Y."/>
            <person name="Lu C.A."/>
            <person name="Wu C.R."/>
            <person name="Lian P.J."/>
            <person name="Hong C.Y."/>
            <person name="Ke Y.T."/>
            <person name="Huang J.H."/>
            <person name="Yeh C.H."/>
        </authorList>
    </citation>
    <scope>FUNCTION</scope>
    <scope>INDUCTION</scope>
    <scope>DISRUPTION PHENOTYPE</scope>
</reference>